<gene>
    <name evidence="1" type="primary">mutS</name>
    <name type="ordered locus">Tpet_1015</name>
</gene>
<accession>A5ILG0</accession>
<dbReference type="EMBL" id="CP000702">
    <property type="protein sequence ID" value="ABQ47033.1"/>
    <property type="molecule type" value="Genomic_DNA"/>
</dbReference>
<dbReference type="RefSeq" id="WP_011943569.1">
    <property type="nucleotide sequence ID" value="NC_009486.1"/>
</dbReference>
<dbReference type="SMR" id="A5ILG0"/>
<dbReference type="STRING" id="390874.Tpet_1015"/>
<dbReference type="KEGG" id="tpt:Tpet_1015"/>
<dbReference type="eggNOG" id="COG0249">
    <property type="taxonomic scope" value="Bacteria"/>
</dbReference>
<dbReference type="HOGENOM" id="CLU_002472_3_1_0"/>
<dbReference type="Proteomes" id="UP000006558">
    <property type="component" value="Chromosome"/>
</dbReference>
<dbReference type="GO" id="GO:0005829">
    <property type="term" value="C:cytosol"/>
    <property type="evidence" value="ECO:0007669"/>
    <property type="project" value="TreeGrafter"/>
</dbReference>
<dbReference type="GO" id="GO:0005524">
    <property type="term" value="F:ATP binding"/>
    <property type="evidence" value="ECO:0007669"/>
    <property type="project" value="UniProtKB-UniRule"/>
</dbReference>
<dbReference type="GO" id="GO:0140664">
    <property type="term" value="F:ATP-dependent DNA damage sensor activity"/>
    <property type="evidence" value="ECO:0007669"/>
    <property type="project" value="InterPro"/>
</dbReference>
<dbReference type="GO" id="GO:0003684">
    <property type="term" value="F:damaged DNA binding"/>
    <property type="evidence" value="ECO:0007669"/>
    <property type="project" value="UniProtKB-UniRule"/>
</dbReference>
<dbReference type="GO" id="GO:0030983">
    <property type="term" value="F:mismatched DNA binding"/>
    <property type="evidence" value="ECO:0007669"/>
    <property type="project" value="InterPro"/>
</dbReference>
<dbReference type="GO" id="GO:0006298">
    <property type="term" value="P:mismatch repair"/>
    <property type="evidence" value="ECO:0007669"/>
    <property type="project" value="UniProtKB-UniRule"/>
</dbReference>
<dbReference type="CDD" id="cd03284">
    <property type="entry name" value="ABC_MutS1"/>
    <property type="match status" value="1"/>
</dbReference>
<dbReference type="FunFam" id="1.10.1420.10:FF:000007">
    <property type="entry name" value="DNA mismatch repair protein MutS"/>
    <property type="match status" value="1"/>
</dbReference>
<dbReference type="FunFam" id="3.40.1170.10:FF:000001">
    <property type="entry name" value="DNA mismatch repair protein MutS"/>
    <property type="match status" value="1"/>
</dbReference>
<dbReference type="FunFam" id="3.40.50.300:FF:002984">
    <property type="entry name" value="DNA mismatch repair protein MutS 1"/>
    <property type="match status" value="1"/>
</dbReference>
<dbReference type="Gene3D" id="1.10.1420.10">
    <property type="match status" value="2"/>
</dbReference>
<dbReference type="Gene3D" id="3.40.1170.10">
    <property type="entry name" value="DNA repair protein MutS, domain I"/>
    <property type="match status" value="1"/>
</dbReference>
<dbReference type="Gene3D" id="3.30.420.110">
    <property type="entry name" value="MutS, connector domain"/>
    <property type="match status" value="1"/>
</dbReference>
<dbReference type="Gene3D" id="3.40.50.300">
    <property type="entry name" value="P-loop containing nucleotide triphosphate hydrolases"/>
    <property type="match status" value="1"/>
</dbReference>
<dbReference type="HAMAP" id="MF_00096">
    <property type="entry name" value="MutS"/>
    <property type="match status" value="1"/>
</dbReference>
<dbReference type="InterPro" id="IPR005748">
    <property type="entry name" value="DNA_mismatch_repair_MutS"/>
</dbReference>
<dbReference type="InterPro" id="IPR007695">
    <property type="entry name" value="DNA_mismatch_repair_MutS-lik_N"/>
</dbReference>
<dbReference type="InterPro" id="IPR017261">
    <property type="entry name" value="DNA_mismatch_repair_MutS/MSH"/>
</dbReference>
<dbReference type="InterPro" id="IPR000432">
    <property type="entry name" value="DNA_mismatch_repair_MutS_C"/>
</dbReference>
<dbReference type="InterPro" id="IPR007861">
    <property type="entry name" value="DNA_mismatch_repair_MutS_clamp"/>
</dbReference>
<dbReference type="InterPro" id="IPR007696">
    <property type="entry name" value="DNA_mismatch_repair_MutS_core"/>
</dbReference>
<dbReference type="InterPro" id="IPR016151">
    <property type="entry name" value="DNA_mismatch_repair_MutS_N"/>
</dbReference>
<dbReference type="InterPro" id="IPR036187">
    <property type="entry name" value="DNA_mismatch_repair_MutS_sf"/>
</dbReference>
<dbReference type="InterPro" id="IPR007860">
    <property type="entry name" value="DNA_mmatch_repair_MutS_con_dom"/>
</dbReference>
<dbReference type="InterPro" id="IPR045076">
    <property type="entry name" value="MutS"/>
</dbReference>
<dbReference type="InterPro" id="IPR036678">
    <property type="entry name" value="MutS_con_dom_sf"/>
</dbReference>
<dbReference type="InterPro" id="IPR027417">
    <property type="entry name" value="P-loop_NTPase"/>
</dbReference>
<dbReference type="NCBIfam" id="TIGR01070">
    <property type="entry name" value="mutS1"/>
    <property type="match status" value="1"/>
</dbReference>
<dbReference type="NCBIfam" id="NF003810">
    <property type="entry name" value="PRK05399.1"/>
    <property type="match status" value="1"/>
</dbReference>
<dbReference type="PANTHER" id="PTHR11361:SF34">
    <property type="entry name" value="DNA MISMATCH REPAIR PROTEIN MSH1, MITOCHONDRIAL"/>
    <property type="match status" value="1"/>
</dbReference>
<dbReference type="PANTHER" id="PTHR11361">
    <property type="entry name" value="DNA MISMATCH REPAIR PROTEIN MUTS FAMILY MEMBER"/>
    <property type="match status" value="1"/>
</dbReference>
<dbReference type="Pfam" id="PF01624">
    <property type="entry name" value="MutS_I"/>
    <property type="match status" value="1"/>
</dbReference>
<dbReference type="Pfam" id="PF05188">
    <property type="entry name" value="MutS_II"/>
    <property type="match status" value="1"/>
</dbReference>
<dbReference type="Pfam" id="PF05192">
    <property type="entry name" value="MutS_III"/>
    <property type="match status" value="1"/>
</dbReference>
<dbReference type="Pfam" id="PF05190">
    <property type="entry name" value="MutS_IV"/>
    <property type="match status" value="1"/>
</dbReference>
<dbReference type="Pfam" id="PF00488">
    <property type="entry name" value="MutS_V"/>
    <property type="match status" value="1"/>
</dbReference>
<dbReference type="PIRSF" id="PIRSF037677">
    <property type="entry name" value="DNA_mis_repair_Msh6"/>
    <property type="match status" value="1"/>
</dbReference>
<dbReference type="SMART" id="SM00534">
    <property type="entry name" value="MUTSac"/>
    <property type="match status" value="1"/>
</dbReference>
<dbReference type="SMART" id="SM00533">
    <property type="entry name" value="MUTSd"/>
    <property type="match status" value="1"/>
</dbReference>
<dbReference type="SUPFAM" id="SSF55271">
    <property type="entry name" value="DNA repair protein MutS, domain I"/>
    <property type="match status" value="1"/>
</dbReference>
<dbReference type="SUPFAM" id="SSF53150">
    <property type="entry name" value="DNA repair protein MutS, domain II"/>
    <property type="match status" value="1"/>
</dbReference>
<dbReference type="SUPFAM" id="SSF48334">
    <property type="entry name" value="DNA repair protein MutS, domain III"/>
    <property type="match status" value="1"/>
</dbReference>
<dbReference type="SUPFAM" id="SSF52540">
    <property type="entry name" value="P-loop containing nucleoside triphosphate hydrolases"/>
    <property type="match status" value="1"/>
</dbReference>
<dbReference type="PROSITE" id="PS00486">
    <property type="entry name" value="DNA_MISMATCH_REPAIR_2"/>
    <property type="match status" value="1"/>
</dbReference>
<comment type="function">
    <text evidence="1">This protein is involved in the repair of mismatches in DNA. It is possible that it carries out the mismatch recognition step. This protein has a weak ATPase activity.</text>
</comment>
<comment type="similarity">
    <text evidence="1">Belongs to the DNA mismatch repair MutS family.</text>
</comment>
<name>MUTS_THEP1</name>
<sequence>MKVTPLMEQYLRIKEQYKDSILLFRLGDFYEAFFEDAKIVSKVLNIVLTRRQDAPMAGIPYHALNSYLKKLVEAGYKVAICDQMEEPSKSKKLIRREVTRVVTPGSILEDEFLSETNNYMAVVSEEKGQYCTIFCDVSTGEVLVHESSDEQETMDLLKNYSISQIVCPDHLKPSLKERFPGVYTESISEWYFSDLEEVEKAYNLKDIHHFELSSLALKTLAALIKYVKYTMITEELNLKPPLLISQRDYMILDSATVENLSLIPGDRGKNLFDVLNNTETPMGARLLKKWILHPLVDRKQIEERLETVEKLVSDRMNLEELRDLLSNVRDVERIVSRVEYNRSVPRDLVALRETLEIIPKLNEILSTFGVFKNLAFPERLLDLLQRAVEDDPAGSPGEGKVIKRGFSPELDEYRDLLEHAEERLKEFEEKERKRTGIQKLKVGYNQVFGYYIEVTKANLDKIPDDYERKQTLVNSERFITPELKEFETKIMAAKERIEELEKELFKNVCEEVKKHKEILLKISEELAKIDVLSTLAYDAILYSYTKPIFSEGRLEIKGGRHPIVERFTQNFVENDIYMDNERRFVVITGPNMSGKSTFIRQVGLISLMAQIGSFVPAQKAILPVFDRIFTRMGARDDLAGGRSTFLVEMNEMALILLKSTEKSLVLLDEVGRGTSTQDGVSIAWAISEELIKRGCKVLFATHFTELTELEKHFPQVQNKTILVKEEGKNVIFTHKVVDGVADRSYGIEVAKIAGIPDRVINRAYEILERNFKNNTKKNGKSNRFSQQIPLFPV</sequence>
<feature type="chain" id="PRO_1000008115" description="DNA mismatch repair protein MutS">
    <location>
        <begin position="1"/>
        <end position="793"/>
    </location>
</feature>
<feature type="binding site" evidence="1">
    <location>
        <begin position="589"/>
        <end position="596"/>
    </location>
    <ligand>
        <name>ATP</name>
        <dbReference type="ChEBI" id="CHEBI:30616"/>
    </ligand>
</feature>
<proteinExistence type="inferred from homology"/>
<protein>
    <recommendedName>
        <fullName evidence="1">DNA mismatch repair protein MutS</fullName>
    </recommendedName>
</protein>
<evidence type="ECO:0000255" key="1">
    <source>
        <dbReference type="HAMAP-Rule" id="MF_00096"/>
    </source>
</evidence>
<organism>
    <name type="scientific">Thermotoga petrophila (strain ATCC BAA-488 / DSM 13995 / JCM 10881 / RKU-1)</name>
    <dbReference type="NCBI Taxonomy" id="390874"/>
    <lineage>
        <taxon>Bacteria</taxon>
        <taxon>Thermotogati</taxon>
        <taxon>Thermotogota</taxon>
        <taxon>Thermotogae</taxon>
        <taxon>Thermotogales</taxon>
        <taxon>Thermotogaceae</taxon>
        <taxon>Thermotoga</taxon>
    </lineage>
</organism>
<reference key="1">
    <citation type="submission" date="2007-05" db="EMBL/GenBank/DDBJ databases">
        <title>Complete sequence of Thermotoga petrophila RKU-1.</title>
        <authorList>
            <consortium name="US DOE Joint Genome Institute"/>
            <person name="Copeland A."/>
            <person name="Lucas S."/>
            <person name="Lapidus A."/>
            <person name="Barry K."/>
            <person name="Glavina del Rio T."/>
            <person name="Dalin E."/>
            <person name="Tice H."/>
            <person name="Pitluck S."/>
            <person name="Sims D."/>
            <person name="Brettin T."/>
            <person name="Bruce D."/>
            <person name="Detter J.C."/>
            <person name="Han C."/>
            <person name="Tapia R."/>
            <person name="Schmutz J."/>
            <person name="Larimer F."/>
            <person name="Land M."/>
            <person name="Hauser L."/>
            <person name="Kyrpides N."/>
            <person name="Mikhailova N."/>
            <person name="Nelson K."/>
            <person name="Gogarten J.P."/>
            <person name="Noll K."/>
            <person name="Richardson P."/>
        </authorList>
    </citation>
    <scope>NUCLEOTIDE SEQUENCE [LARGE SCALE GENOMIC DNA]</scope>
    <source>
        <strain>ATCC BAA-488 / DSM 13995 / JCM 10881 / RKU-1</strain>
    </source>
</reference>
<keyword id="KW-0067">ATP-binding</keyword>
<keyword id="KW-0227">DNA damage</keyword>
<keyword id="KW-0234">DNA repair</keyword>
<keyword id="KW-0238">DNA-binding</keyword>
<keyword id="KW-0547">Nucleotide-binding</keyword>